<organism>
    <name type="scientific">Oryza sativa subsp. japonica</name>
    <name type="common">Rice</name>
    <dbReference type="NCBI Taxonomy" id="39947"/>
    <lineage>
        <taxon>Eukaryota</taxon>
        <taxon>Viridiplantae</taxon>
        <taxon>Streptophyta</taxon>
        <taxon>Embryophyta</taxon>
        <taxon>Tracheophyta</taxon>
        <taxon>Spermatophyta</taxon>
        <taxon>Magnoliopsida</taxon>
        <taxon>Liliopsida</taxon>
        <taxon>Poales</taxon>
        <taxon>Poaceae</taxon>
        <taxon>BOP clade</taxon>
        <taxon>Oryzoideae</taxon>
        <taxon>Oryzeae</taxon>
        <taxon>Oryzinae</taxon>
        <taxon>Oryza</taxon>
        <taxon>Oryza sativa</taxon>
    </lineage>
</organism>
<comment type="function">
    <text evidence="1">High-affinity potassium transporter.</text>
</comment>
<comment type="subcellular location">
    <subcellularLocation>
        <location evidence="3">Membrane</location>
        <topology evidence="3">Multi-pass membrane protein</topology>
    </subcellularLocation>
</comment>
<comment type="similarity">
    <text evidence="3">Belongs to the HAK/KUP transporter (TC 2.A.72.3) family.</text>
</comment>
<keyword id="KW-0325">Glycoprotein</keyword>
<keyword id="KW-0406">Ion transport</keyword>
<keyword id="KW-0472">Membrane</keyword>
<keyword id="KW-0630">Potassium</keyword>
<keyword id="KW-0633">Potassium transport</keyword>
<keyword id="KW-1185">Reference proteome</keyword>
<keyword id="KW-0812">Transmembrane</keyword>
<keyword id="KW-1133">Transmembrane helix</keyword>
<keyword id="KW-0813">Transport</keyword>
<reference key="1">
    <citation type="journal article" date="2005" name="Nature">
        <title>The map-based sequence of the rice genome.</title>
        <authorList>
            <consortium name="International rice genome sequencing project (IRGSP)"/>
        </authorList>
    </citation>
    <scope>NUCLEOTIDE SEQUENCE [LARGE SCALE GENOMIC DNA]</scope>
    <source>
        <strain>cv. Nipponbare</strain>
    </source>
</reference>
<reference key="2">
    <citation type="journal article" date="2008" name="Nucleic Acids Res.">
        <title>The rice annotation project database (RAP-DB): 2008 update.</title>
        <authorList>
            <consortium name="The rice annotation project (RAP)"/>
        </authorList>
    </citation>
    <scope>GENOME REANNOTATION</scope>
    <source>
        <strain>cv. Nipponbare</strain>
    </source>
</reference>
<reference key="3">
    <citation type="journal article" date="2013" name="Rice">
        <title>Improvement of the Oryza sativa Nipponbare reference genome using next generation sequence and optical map data.</title>
        <authorList>
            <person name="Kawahara Y."/>
            <person name="de la Bastide M."/>
            <person name="Hamilton J.P."/>
            <person name="Kanamori H."/>
            <person name="McCombie W.R."/>
            <person name="Ouyang S."/>
            <person name="Schwartz D.C."/>
            <person name="Tanaka T."/>
            <person name="Wu J."/>
            <person name="Zhou S."/>
            <person name="Childs K.L."/>
            <person name="Davidson R.M."/>
            <person name="Lin H."/>
            <person name="Quesada-Ocampo L."/>
            <person name="Vaillancourt B."/>
            <person name="Sakai H."/>
            <person name="Lee S.S."/>
            <person name="Kim J."/>
            <person name="Numa H."/>
            <person name="Itoh T."/>
            <person name="Buell C.R."/>
            <person name="Matsumoto T."/>
        </authorList>
    </citation>
    <scope>GENOME REANNOTATION</scope>
    <source>
        <strain>cv. Nipponbare</strain>
    </source>
</reference>
<reference key="4">
    <citation type="journal article" date="2005" name="PLoS Biol.">
        <title>The genomes of Oryza sativa: a history of duplications.</title>
        <authorList>
            <person name="Yu J."/>
            <person name="Wang J."/>
            <person name="Lin W."/>
            <person name="Li S."/>
            <person name="Li H."/>
            <person name="Zhou J."/>
            <person name="Ni P."/>
            <person name="Dong W."/>
            <person name="Hu S."/>
            <person name="Zeng C."/>
            <person name="Zhang J."/>
            <person name="Zhang Y."/>
            <person name="Li R."/>
            <person name="Xu Z."/>
            <person name="Li S."/>
            <person name="Li X."/>
            <person name="Zheng H."/>
            <person name="Cong L."/>
            <person name="Lin L."/>
            <person name="Yin J."/>
            <person name="Geng J."/>
            <person name="Li G."/>
            <person name="Shi J."/>
            <person name="Liu J."/>
            <person name="Lv H."/>
            <person name="Li J."/>
            <person name="Wang J."/>
            <person name="Deng Y."/>
            <person name="Ran L."/>
            <person name="Shi X."/>
            <person name="Wang X."/>
            <person name="Wu Q."/>
            <person name="Li C."/>
            <person name="Ren X."/>
            <person name="Wang J."/>
            <person name="Wang X."/>
            <person name="Li D."/>
            <person name="Liu D."/>
            <person name="Zhang X."/>
            <person name="Ji Z."/>
            <person name="Zhao W."/>
            <person name="Sun Y."/>
            <person name="Zhang Z."/>
            <person name="Bao J."/>
            <person name="Han Y."/>
            <person name="Dong L."/>
            <person name="Ji J."/>
            <person name="Chen P."/>
            <person name="Wu S."/>
            <person name="Liu J."/>
            <person name="Xiao Y."/>
            <person name="Bu D."/>
            <person name="Tan J."/>
            <person name="Yang L."/>
            <person name="Ye C."/>
            <person name="Zhang J."/>
            <person name="Xu J."/>
            <person name="Zhou Y."/>
            <person name="Yu Y."/>
            <person name="Zhang B."/>
            <person name="Zhuang S."/>
            <person name="Wei H."/>
            <person name="Liu B."/>
            <person name="Lei M."/>
            <person name="Yu H."/>
            <person name="Li Y."/>
            <person name="Xu H."/>
            <person name="Wei S."/>
            <person name="He X."/>
            <person name="Fang L."/>
            <person name="Zhang Z."/>
            <person name="Zhang Y."/>
            <person name="Huang X."/>
            <person name="Su Z."/>
            <person name="Tong W."/>
            <person name="Li J."/>
            <person name="Tong Z."/>
            <person name="Li S."/>
            <person name="Ye J."/>
            <person name="Wang L."/>
            <person name="Fang L."/>
            <person name="Lei T."/>
            <person name="Chen C.-S."/>
            <person name="Chen H.-C."/>
            <person name="Xu Z."/>
            <person name="Li H."/>
            <person name="Huang H."/>
            <person name="Zhang F."/>
            <person name="Xu H."/>
            <person name="Li N."/>
            <person name="Zhao C."/>
            <person name="Li S."/>
            <person name="Dong L."/>
            <person name="Huang Y."/>
            <person name="Li L."/>
            <person name="Xi Y."/>
            <person name="Qi Q."/>
            <person name="Li W."/>
            <person name="Zhang B."/>
            <person name="Hu W."/>
            <person name="Zhang Y."/>
            <person name="Tian X."/>
            <person name="Jiao Y."/>
            <person name="Liang X."/>
            <person name="Jin J."/>
            <person name="Gao L."/>
            <person name="Zheng W."/>
            <person name="Hao B."/>
            <person name="Liu S.-M."/>
            <person name="Wang W."/>
            <person name="Yuan L."/>
            <person name="Cao M."/>
            <person name="McDermott J."/>
            <person name="Samudrala R."/>
            <person name="Wang J."/>
            <person name="Wong G.K.-S."/>
            <person name="Yang H."/>
        </authorList>
    </citation>
    <scope>NUCLEOTIDE SEQUENCE [LARGE SCALE GENOMIC DNA]</scope>
    <source>
        <strain>cv. Nipponbare</strain>
    </source>
</reference>
<reference key="5">
    <citation type="journal article" date="2003" name="Science">
        <title>Collection, mapping, and annotation of over 28,000 cDNA clones from japonica rice.</title>
        <authorList>
            <consortium name="The rice full-length cDNA consortium"/>
        </authorList>
    </citation>
    <scope>NUCLEOTIDE SEQUENCE [LARGE SCALE MRNA]</scope>
    <source>
        <strain>cv. Nipponbare</strain>
    </source>
</reference>
<reference key="6">
    <citation type="journal article" date="2000" name="Physiol. Plantarum">
        <title>Cloning of Arabidopsis and barley cDNAs encoding HAK potassium transporters in root and shoot cells.</title>
        <authorList>
            <person name="Rubio F."/>
            <person name="Santa-Maria G.E."/>
            <person name="Rodriguez-Navarro A."/>
        </authorList>
    </citation>
    <scope>NUCLEOTIDE SEQUENCE [MRNA] OF 82-697</scope>
</reference>
<reference key="7">
    <citation type="journal article" date="2002" name="Plant Physiol.">
        <title>Inventory and functional characterization of the HAK potassium transporters of rice.</title>
        <authorList>
            <person name="Banuelos M.A."/>
            <person name="Garciadeblas B."/>
            <person name="Cubero B."/>
            <person name="Rodriguez-Navarro A."/>
        </authorList>
    </citation>
    <scope>NOMENCLATURE</scope>
</reference>
<reference key="8">
    <citation type="journal article" date="2009" name="J. Genet. Genomics">
        <title>Molecular evolution and functional divergence of HAK potassium transporter gene family in rice (Oryza sativa L.).</title>
        <authorList>
            <person name="Yang Z."/>
            <person name="Gao Q."/>
            <person name="Sun C."/>
            <person name="Li W."/>
            <person name="Gu S."/>
            <person name="Xu C."/>
        </authorList>
    </citation>
    <scope>GENE FAMILY</scope>
</reference>
<accession>Q6YSA9</accession>
<accession>A0A0P0XGH8</accession>
<accession>Q0J551</accession>
<accession>Q9M7J7</accession>
<feature type="chain" id="PRO_0000209093" description="Probable potassium transporter 4">
    <location>
        <begin position="1"/>
        <end position="697"/>
    </location>
</feature>
<feature type="topological domain" description="Cytoplasmic" evidence="2">
    <location>
        <begin position="1"/>
        <end position="29"/>
    </location>
</feature>
<feature type="transmembrane region" description="Helical; Name=1" evidence="2">
    <location>
        <begin position="30"/>
        <end position="50"/>
    </location>
</feature>
<feature type="topological domain" description="Extracellular" evidence="2">
    <location>
        <begin position="51"/>
        <end position="66"/>
    </location>
</feature>
<feature type="transmembrane region" description="Helical; Name=2" evidence="2">
    <location>
        <begin position="67"/>
        <end position="87"/>
    </location>
</feature>
<feature type="topological domain" description="Cytoplasmic" evidence="2">
    <location>
        <begin position="88"/>
        <end position="152"/>
    </location>
</feature>
<feature type="transmembrane region" description="Helical; Name=3" evidence="2">
    <location>
        <begin position="153"/>
        <end position="173"/>
    </location>
</feature>
<feature type="topological domain" description="Extracellular" evidence="2">
    <location>
        <begin position="174"/>
        <end position="189"/>
    </location>
</feature>
<feature type="transmembrane region" description="Helical; Name=4" evidence="2">
    <location>
        <begin position="190"/>
        <end position="210"/>
    </location>
</feature>
<feature type="topological domain" description="Cytoplasmic" evidence="2">
    <location>
        <begin position="211"/>
        <end position="217"/>
    </location>
</feature>
<feature type="transmembrane region" description="Helical; Name=5" evidence="2">
    <location>
        <begin position="218"/>
        <end position="238"/>
    </location>
</feature>
<feature type="topological domain" description="Extracellular" evidence="2">
    <location>
        <begin position="239"/>
        <end position="271"/>
    </location>
</feature>
<feature type="transmembrane region" description="Helical; Name=6" evidence="2">
    <location>
        <begin position="272"/>
        <end position="292"/>
    </location>
</feature>
<feature type="topological domain" description="Cytoplasmic" evidence="2">
    <location>
        <begin position="293"/>
        <end position="300"/>
    </location>
</feature>
<feature type="transmembrane region" description="Helical; Name=7" evidence="2">
    <location>
        <begin position="301"/>
        <end position="321"/>
    </location>
</feature>
<feature type="topological domain" description="Extracellular" evidence="2">
    <location>
        <begin position="322"/>
        <end position="338"/>
    </location>
</feature>
<feature type="transmembrane region" description="Helical; Name=8" evidence="2">
    <location>
        <begin position="339"/>
        <end position="359"/>
    </location>
</feature>
<feature type="topological domain" description="Cytoplasmic" evidence="2">
    <location>
        <begin position="360"/>
        <end position="390"/>
    </location>
</feature>
<feature type="transmembrane region" description="Helical; Name=9" evidence="2">
    <location>
        <begin position="391"/>
        <end position="411"/>
    </location>
</feature>
<feature type="topological domain" description="Extracellular" evidence="2">
    <location>
        <begin position="412"/>
        <end position="422"/>
    </location>
</feature>
<feature type="transmembrane region" description="Helical; Name=10" evidence="2">
    <location>
        <begin position="423"/>
        <end position="443"/>
    </location>
</feature>
<feature type="topological domain" description="Cytoplasmic" evidence="2">
    <location>
        <begin position="444"/>
        <end position="447"/>
    </location>
</feature>
<feature type="transmembrane region" description="Helical; Name=11" evidence="2">
    <location>
        <begin position="448"/>
        <end position="468"/>
    </location>
</feature>
<feature type="topological domain" description="Extracellular" evidence="2">
    <location>
        <begin position="469"/>
        <end position="475"/>
    </location>
</feature>
<feature type="transmembrane region" description="Helical; Name=12" evidence="2">
    <location>
        <begin position="476"/>
        <end position="496"/>
    </location>
</feature>
<feature type="topological domain" description="Cytoplasmic" evidence="2">
    <location>
        <begin position="497"/>
        <end position="697"/>
    </location>
</feature>
<feature type="glycosylation site" description="N-linked (GlcNAc...) asparagine" evidence="2">
    <location>
        <position position="55"/>
    </location>
</feature>
<feature type="glycosylation site" description="N-linked (GlcNAc...) asparagine" evidence="2">
    <location>
        <position position="264"/>
    </location>
</feature>
<feature type="sequence conflict" description="In Ref. 6; AAF36497." evidence="3" ref="6">
    <original>G</original>
    <variation>R</variation>
    <location>
        <position position="389"/>
    </location>
</feature>
<feature type="sequence conflict" description="In Ref. 6; AAF36497." evidence="3" ref="6">
    <original>T</original>
    <variation>N</variation>
    <location>
        <position position="396"/>
    </location>
</feature>
<feature type="sequence conflict" description="In Ref. 6; AAF36497." evidence="3" ref="6">
    <original>GFGDG</original>
    <variation>RFRER</variation>
    <location>
        <begin position="410"/>
        <end position="414"/>
    </location>
</feature>
<feature type="sequence conflict" description="In Ref. 6; AAF36497." evidence="3" ref="6">
    <original>A</original>
    <variation>S</variation>
    <location>
        <position position="612"/>
    </location>
</feature>
<sequence>MSSSHTVTVSMDVEAGQKNKDKKGISQDLILAYKTLGVVFGGLVTSPLYVYPSMNLTNPTEEDYLGIYSIMFWTLTLIGVVKYICIALNADDHGEGGTFAMYSLLCQHANIGILPSKKIYTEEENLISNQPVVAGRPGRLRRFIESSIIARRLLLLTAILGMCMLIGDGILTPAISVLSAIDGLRGPFPSVSKPAVEGLSAAILVGLFLLQKYGTSKVSFMFSPIMAAWTFATPVIGVYSIWRYYPGIFKAMSPHYIVRFFMTNQTRGWQLLGGTVLCITGAEAMFADLGHFSKRSIQIAFMSSIYPSLVLTYAGQTAYLINNVDDFSDGFYKFVPRPVYWPMFIIATLAAIVASQSLISATFSVIKQSVVLDYFPRVKVVHTSKDKEGEVYSPETNYMLMLLCVGVILGFGDGKDIGNAFGVVVILVMLITTILLTLVMLIIWGTHVVLVALYLVPFLLLEATYVSAVCTKILRGGWVPFAVSVALAAVMFGWYYGRQRKTEYEAANKVTLERLGELLSGPGLRRVPGLCFFYSNRQDGGWLTPVLAHYIRNMRSLHEVTVFLTLRYLLVAKVDGKDRVQAVRRLGPAGVYGCTIQYGYADAIDFEEDDIAGQVVGALRERVVDGEEEGERVEAARAAGVVHVRGKMRFHVGKDTRLFDRVLLGFYELLHGACRSALPALGIPLQQRVEIGMLYKA</sequence>
<gene>
    <name type="primary">HAK4</name>
    <name type="ordered locus">Os08g0466200</name>
    <name type="ordered locus">LOC_Os08g36340</name>
    <name type="ORF">OsJ_27614</name>
    <name type="ORF">P0104B02.21</name>
</gene>
<proteinExistence type="evidence at transcript level"/>
<evidence type="ECO:0000250" key="1"/>
<evidence type="ECO:0000255" key="2"/>
<evidence type="ECO:0000305" key="3"/>
<dbReference type="EMBL" id="AP006461">
    <property type="protein sequence ID" value="BAD10774.1"/>
    <property type="molecule type" value="Genomic_DNA"/>
</dbReference>
<dbReference type="EMBL" id="AP008214">
    <property type="protein sequence ID" value="BAF23914.1"/>
    <property type="molecule type" value="Genomic_DNA"/>
</dbReference>
<dbReference type="EMBL" id="AP014964">
    <property type="protein sequence ID" value="BAT05800.1"/>
    <property type="molecule type" value="Genomic_DNA"/>
</dbReference>
<dbReference type="EMBL" id="CM000145">
    <property type="protein sequence ID" value="EEE68836.1"/>
    <property type="molecule type" value="Genomic_DNA"/>
</dbReference>
<dbReference type="EMBL" id="AK071698">
    <property type="protein sequence ID" value="BAG92635.1"/>
    <property type="molecule type" value="mRNA"/>
</dbReference>
<dbReference type="EMBL" id="AF129485">
    <property type="protein sequence ID" value="AAF36497.1"/>
    <property type="molecule type" value="mRNA"/>
</dbReference>
<dbReference type="RefSeq" id="XP_015649439.1">
    <property type="nucleotide sequence ID" value="XM_015793953.1"/>
</dbReference>
<dbReference type="FunCoup" id="Q6YSA9">
    <property type="interactions" value="26"/>
</dbReference>
<dbReference type="STRING" id="39947.Q6YSA9"/>
<dbReference type="GlyCosmos" id="Q6YSA9">
    <property type="glycosylation" value="2 sites, No reported glycans"/>
</dbReference>
<dbReference type="PaxDb" id="39947-Q6YSA9"/>
<dbReference type="EnsemblPlants" id="Os08t0466200-01">
    <property type="protein sequence ID" value="Os08t0466200-01"/>
    <property type="gene ID" value="Os08g0466200"/>
</dbReference>
<dbReference type="Gramene" id="Os08t0466200-01">
    <property type="protein sequence ID" value="Os08t0466200-01"/>
    <property type="gene ID" value="Os08g0466200"/>
</dbReference>
<dbReference type="KEGG" id="dosa:Os08g0466200"/>
<dbReference type="eggNOG" id="ENOG502QPSA">
    <property type="taxonomic scope" value="Eukaryota"/>
</dbReference>
<dbReference type="HOGENOM" id="CLU_008142_4_0_1"/>
<dbReference type="InParanoid" id="Q6YSA9"/>
<dbReference type="OMA" id="SPETNYM"/>
<dbReference type="OrthoDB" id="504708at2759"/>
<dbReference type="Proteomes" id="UP000000763">
    <property type="component" value="Chromosome 8"/>
</dbReference>
<dbReference type="Proteomes" id="UP000007752">
    <property type="component" value="Chromosome 8"/>
</dbReference>
<dbReference type="Proteomes" id="UP000059680">
    <property type="component" value="Chromosome 8"/>
</dbReference>
<dbReference type="GO" id="GO:0016020">
    <property type="term" value="C:membrane"/>
    <property type="evidence" value="ECO:0000318"/>
    <property type="project" value="GO_Central"/>
</dbReference>
<dbReference type="GO" id="GO:0015079">
    <property type="term" value="F:potassium ion transmembrane transporter activity"/>
    <property type="evidence" value="ECO:0000318"/>
    <property type="project" value="GO_Central"/>
</dbReference>
<dbReference type="GO" id="GO:0006813">
    <property type="term" value="P:potassium ion transport"/>
    <property type="evidence" value="ECO:0000318"/>
    <property type="project" value="GO_Central"/>
</dbReference>
<dbReference type="InterPro" id="IPR003855">
    <property type="entry name" value="K+_transporter"/>
</dbReference>
<dbReference type="InterPro" id="IPR053952">
    <property type="entry name" value="K_trans_C"/>
</dbReference>
<dbReference type="InterPro" id="IPR053951">
    <property type="entry name" value="K_trans_N"/>
</dbReference>
<dbReference type="NCBIfam" id="TIGR00794">
    <property type="entry name" value="kup"/>
    <property type="match status" value="1"/>
</dbReference>
<dbReference type="PANTHER" id="PTHR30540">
    <property type="entry name" value="OSMOTIC STRESS POTASSIUM TRANSPORTER"/>
    <property type="match status" value="1"/>
</dbReference>
<dbReference type="PANTHER" id="PTHR30540:SF33">
    <property type="entry name" value="POTASSIUM TRANSPORTER 4-RELATED"/>
    <property type="match status" value="1"/>
</dbReference>
<dbReference type="Pfam" id="PF02705">
    <property type="entry name" value="K_trans"/>
    <property type="match status" value="1"/>
</dbReference>
<dbReference type="Pfam" id="PF22776">
    <property type="entry name" value="K_trans_C"/>
    <property type="match status" value="1"/>
</dbReference>
<protein>
    <recommendedName>
        <fullName>Probable potassium transporter 4</fullName>
    </recommendedName>
    <alternativeName>
        <fullName>OsHAK4</fullName>
    </alternativeName>
</protein>
<name>HAK4_ORYSJ</name>